<accession>B2IQ67</accession>
<evidence type="ECO:0000255" key="1">
    <source>
        <dbReference type="HAMAP-Rule" id="MF_01210"/>
    </source>
</evidence>
<protein>
    <recommendedName>
        <fullName evidence="1">Carbamoyl phosphate synthase large chain</fullName>
        <ecNumber evidence="1">6.3.4.16</ecNumber>
        <ecNumber evidence="1">6.3.5.5</ecNumber>
    </recommendedName>
    <alternativeName>
        <fullName evidence="1">Carbamoyl phosphate synthetase ammonia chain</fullName>
    </alternativeName>
</protein>
<reference key="1">
    <citation type="journal article" date="2009" name="BMC Genomics">
        <title>Genome evolution driven by host adaptations results in a more virulent and antimicrobial-resistant Streptococcus pneumoniae serotype 14.</title>
        <authorList>
            <person name="Ding F."/>
            <person name="Tang P."/>
            <person name="Hsu M.-H."/>
            <person name="Cui P."/>
            <person name="Hu S."/>
            <person name="Yu J."/>
            <person name="Chiu C.-H."/>
        </authorList>
    </citation>
    <scope>NUCLEOTIDE SEQUENCE [LARGE SCALE GENOMIC DNA]</scope>
    <source>
        <strain>CGSP14</strain>
    </source>
</reference>
<keyword id="KW-0028">Amino-acid biosynthesis</keyword>
<keyword id="KW-0055">Arginine biosynthesis</keyword>
<keyword id="KW-0067">ATP-binding</keyword>
<keyword id="KW-0436">Ligase</keyword>
<keyword id="KW-0460">Magnesium</keyword>
<keyword id="KW-0464">Manganese</keyword>
<keyword id="KW-0479">Metal-binding</keyword>
<keyword id="KW-0547">Nucleotide-binding</keyword>
<keyword id="KW-0665">Pyrimidine biosynthesis</keyword>
<keyword id="KW-0677">Repeat</keyword>
<proteinExistence type="inferred from homology"/>
<feature type="chain" id="PRO_1000138901" description="Carbamoyl phosphate synthase large chain">
    <location>
        <begin position="1"/>
        <end position="1058"/>
    </location>
</feature>
<feature type="domain" description="ATP-grasp 1" evidence="1">
    <location>
        <begin position="133"/>
        <end position="327"/>
    </location>
</feature>
<feature type="domain" description="ATP-grasp 2" evidence="1">
    <location>
        <begin position="671"/>
        <end position="861"/>
    </location>
</feature>
<feature type="domain" description="MGS-like" evidence="1">
    <location>
        <begin position="930"/>
        <end position="1058"/>
    </location>
</feature>
<feature type="region of interest" description="Carboxyphosphate synthetic domain" evidence="1">
    <location>
        <begin position="1"/>
        <end position="401"/>
    </location>
</feature>
<feature type="region of interest" description="Oligomerization domain" evidence="1">
    <location>
        <begin position="402"/>
        <end position="546"/>
    </location>
</feature>
<feature type="region of interest" description="Carbamoyl phosphate synthetic domain" evidence="1">
    <location>
        <begin position="547"/>
        <end position="929"/>
    </location>
</feature>
<feature type="region of interest" description="Allosteric domain" evidence="1">
    <location>
        <begin position="930"/>
        <end position="1058"/>
    </location>
</feature>
<feature type="binding site" evidence="1">
    <location>
        <position position="129"/>
    </location>
    <ligand>
        <name>ATP</name>
        <dbReference type="ChEBI" id="CHEBI:30616"/>
        <label>1</label>
    </ligand>
</feature>
<feature type="binding site" evidence="1">
    <location>
        <position position="169"/>
    </location>
    <ligand>
        <name>ATP</name>
        <dbReference type="ChEBI" id="CHEBI:30616"/>
        <label>1</label>
    </ligand>
</feature>
<feature type="binding site" evidence="1">
    <location>
        <position position="175"/>
    </location>
    <ligand>
        <name>ATP</name>
        <dbReference type="ChEBI" id="CHEBI:30616"/>
        <label>1</label>
    </ligand>
</feature>
<feature type="binding site" evidence="1">
    <location>
        <position position="176"/>
    </location>
    <ligand>
        <name>ATP</name>
        <dbReference type="ChEBI" id="CHEBI:30616"/>
        <label>1</label>
    </ligand>
</feature>
<feature type="binding site" evidence="1">
    <location>
        <position position="208"/>
    </location>
    <ligand>
        <name>ATP</name>
        <dbReference type="ChEBI" id="CHEBI:30616"/>
        <label>1</label>
    </ligand>
</feature>
<feature type="binding site" evidence="1">
    <location>
        <position position="210"/>
    </location>
    <ligand>
        <name>ATP</name>
        <dbReference type="ChEBI" id="CHEBI:30616"/>
        <label>1</label>
    </ligand>
</feature>
<feature type="binding site" evidence="1">
    <location>
        <position position="215"/>
    </location>
    <ligand>
        <name>ATP</name>
        <dbReference type="ChEBI" id="CHEBI:30616"/>
        <label>1</label>
    </ligand>
</feature>
<feature type="binding site" evidence="1">
    <location>
        <position position="241"/>
    </location>
    <ligand>
        <name>ATP</name>
        <dbReference type="ChEBI" id="CHEBI:30616"/>
        <label>1</label>
    </ligand>
</feature>
<feature type="binding site" evidence="1">
    <location>
        <position position="242"/>
    </location>
    <ligand>
        <name>ATP</name>
        <dbReference type="ChEBI" id="CHEBI:30616"/>
        <label>1</label>
    </ligand>
</feature>
<feature type="binding site" evidence="1">
    <location>
        <position position="243"/>
    </location>
    <ligand>
        <name>ATP</name>
        <dbReference type="ChEBI" id="CHEBI:30616"/>
        <label>1</label>
    </ligand>
</feature>
<feature type="binding site" evidence="1">
    <location>
        <position position="284"/>
    </location>
    <ligand>
        <name>ATP</name>
        <dbReference type="ChEBI" id="CHEBI:30616"/>
        <label>1</label>
    </ligand>
</feature>
<feature type="binding site" evidence="1">
    <location>
        <position position="284"/>
    </location>
    <ligand>
        <name>Mg(2+)</name>
        <dbReference type="ChEBI" id="CHEBI:18420"/>
        <label>1</label>
    </ligand>
</feature>
<feature type="binding site" evidence="1">
    <location>
        <position position="284"/>
    </location>
    <ligand>
        <name>Mn(2+)</name>
        <dbReference type="ChEBI" id="CHEBI:29035"/>
        <label>1</label>
    </ligand>
</feature>
<feature type="binding site" evidence="1">
    <location>
        <position position="298"/>
    </location>
    <ligand>
        <name>ATP</name>
        <dbReference type="ChEBI" id="CHEBI:30616"/>
        <label>1</label>
    </ligand>
</feature>
<feature type="binding site" evidence="1">
    <location>
        <position position="298"/>
    </location>
    <ligand>
        <name>Mg(2+)</name>
        <dbReference type="ChEBI" id="CHEBI:18420"/>
        <label>1</label>
    </ligand>
</feature>
<feature type="binding site" evidence="1">
    <location>
        <position position="298"/>
    </location>
    <ligand>
        <name>Mg(2+)</name>
        <dbReference type="ChEBI" id="CHEBI:18420"/>
        <label>2</label>
    </ligand>
</feature>
<feature type="binding site" evidence="1">
    <location>
        <position position="298"/>
    </location>
    <ligand>
        <name>Mn(2+)</name>
        <dbReference type="ChEBI" id="CHEBI:29035"/>
        <label>1</label>
    </ligand>
</feature>
<feature type="binding site" evidence="1">
    <location>
        <position position="298"/>
    </location>
    <ligand>
        <name>Mn(2+)</name>
        <dbReference type="ChEBI" id="CHEBI:29035"/>
        <label>2</label>
    </ligand>
</feature>
<feature type="binding site" evidence="1">
    <location>
        <position position="300"/>
    </location>
    <ligand>
        <name>Mg(2+)</name>
        <dbReference type="ChEBI" id="CHEBI:18420"/>
        <label>2</label>
    </ligand>
</feature>
<feature type="binding site" evidence="1">
    <location>
        <position position="300"/>
    </location>
    <ligand>
        <name>Mn(2+)</name>
        <dbReference type="ChEBI" id="CHEBI:29035"/>
        <label>2</label>
    </ligand>
</feature>
<feature type="binding site" evidence="1">
    <location>
        <position position="707"/>
    </location>
    <ligand>
        <name>ATP</name>
        <dbReference type="ChEBI" id="CHEBI:30616"/>
        <label>2</label>
    </ligand>
</feature>
<feature type="binding site" evidence="1">
    <location>
        <position position="746"/>
    </location>
    <ligand>
        <name>ATP</name>
        <dbReference type="ChEBI" id="CHEBI:30616"/>
        <label>2</label>
    </ligand>
</feature>
<feature type="binding site" evidence="1">
    <location>
        <position position="748"/>
    </location>
    <ligand>
        <name>ATP</name>
        <dbReference type="ChEBI" id="CHEBI:30616"/>
        <label>2</label>
    </ligand>
</feature>
<feature type="binding site" evidence="1">
    <location>
        <position position="752"/>
    </location>
    <ligand>
        <name>ATP</name>
        <dbReference type="ChEBI" id="CHEBI:30616"/>
        <label>2</label>
    </ligand>
</feature>
<feature type="binding site" evidence="1">
    <location>
        <position position="777"/>
    </location>
    <ligand>
        <name>ATP</name>
        <dbReference type="ChEBI" id="CHEBI:30616"/>
        <label>2</label>
    </ligand>
</feature>
<feature type="binding site" evidence="1">
    <location>
        <position position="778"/>
    </location>
    <ligand>
        <name>ATP</name>
        <dbReference type="ChEBI" id="CHEBI:30616"/>
        <label>2</label>
    </ligand>
</feature>
<feature type="binding site" evidence="1">
    <location>
        <position position="779"/>
    </location>
    <ligand>
        <name>ATP</name>
        <dbReference type="ChEBI" id="CHEBI:30616"/>
        <label>2</label>
    </ligand>
</feature>
<feature type="binding site" evidence="1">
    <location>
        <position position="780"/>
    </location>
    <ligand>
        <name>ATP</name>
        <dbReference type="ChEBI" id="CHEBI:30616"/>
        <label>2</label>
    </ligand>
</feature>
<feature type="binding site" evidence="1">
    <location>
        <position position="820"/>
    </location>
    <ligand>
        <name>ATP</name>
        <dbReference type="ChEBI" id="CHEBI:30616"/>
        <label>2</label>
    </ligand>
</feature>
<feature type="binding site" evidence="1">
    <location>
        <position position="820"/>
    </location>
    <ligand>
        <name>Mg(2+)</name>
        <dbReference type="ChEBI" id="CHEBI:18420"/>
        <label>3</label>
    </ligand>
</feature>
<feature type="binding site" evidence="1">
    <location>
        <position position="820"/>
    </location>
    <ligand>
        <name>Mn(2+)</name>
        <dbReference type="ChEBI" id="CHEBI:29035"/>
        <label>3</label>
    </ligand>
</feature>
<feature type="binding site" evidence="1">
    <location>
        <position position="832"/>
    </location>
    <ligand>
        <name>ATP</name>
        <dbReference type="ChEBI" id="CHEBI:30616"/>
        <label>2</label>
    </ligand>
</feature>
<feature type="binding site" evidence="1">
    <location>
        <position position="832"/>
    </location>
    <ligand>
        <name>Mg(2+)</name>
        <dbReference type="ChEBI" id="CHEBI:18420"/>
        <label>3</label>
    </ligand>
</feature>
<feature type="binding site" evidence="1">
    <location>
        <position position="832"/>
    </location>
    <ligand>
        <name>Mg(2+)</name>
        <dbReference type="ChEBI" id="CHEBI:18420"/>
        <label>4</label>
    </ligand>
</feature>
<feature type="binding site" evidence="1">
    <location>
        <position position="832"/>
    </location>
    <ligand>
        <name>Mn(2+)</name>
        <dbReference type="ChEBI" id="CHEBI:29035"/>
        <label>3</label>
    </ligand>
</feature>
<feature type="binding site" evidence="1">
    <location>
        <position position="832"/>
    </location>
    <ligand>
        <name>Mn(2+)</name>
        <dbReference type="ChEBI" id="CHEBI:29035"/>
        <label>4</label>
    </ligand>
</feature>
<feature type="binding site" evidence="1">
    <location>
        <position position="834"/>
    </location>
    <ligand>
        <name>Mg(2+)</name>
        <dbReference type="ChEBI" id="CHEBI:18420"/>
        <label>4</label>
    </ligand>
</feature>
<feature type="binding site" evidence="1">
    <location>
        <position position="834"/>
    </location>
    <ligand>
        <name>Mn(2+)</name>
        <dbReference type="ChEBI" id="CHEBI:29035"/>
        <label>4</label>
    </ligand>
</feature>
<name>CARB_STRPS</name>
<sequence>MPKRTDIQKIMVIGSGPIIIGQAAEFDYAGTQACLSLKEEGYEVVLVNSNPATIMTDKEIADKVYIEPITLEFVTRILRKEGPDALLPTLGGQTGLNMAMELSKNGILDELGVELLGTKLSAIDQAEDRDLFKQLMEELEQPIPESEIVNTVEEAVAFAATIGYPVIVRPAFTLGGTGGGMCANEKELREITENGLKLSPVTQCLIERSIAGFKEIEYEVMRDSADNALVVCNMENFDPVGIHTGDSIVFAPAQTMSDYENQMLRDASLSIIRALKIEGGCNVQLALDPNSFKYYVIEVNPRVSRSSALASKATGYPIAKLAAKIAVGLTLDEVINPVTGSTYAMFEPALDYVVAKIPRFPFDKFEKGERRLGTQMKATGEVMAIGRNIEESLLKACRSLEIGVHHNEIPELAAVSDDTLIEKVVKAQDDRLFYVSEAIRRGYTPEEIAELTKIDIFYLDKLLHIFEIEQELGAHPQDLEVLKTAKLNGFSDRKIAELWGTTDDKVRQLRLENKIVPVYKMVDTCAAEFDSETPYFYSTYGWENESIKSDKESVLVLGSGPIRIGQGVEFDYATVHSVKAIQAAGYEAIIMNSNPETVSTDFSVSDKLYFEPLTFEDVMNVIDLEQPKGVIVQFGGQTAINLAEPLAKAGVTILGTQVADLDRAEDRDLFEQALKELDIPQPPGQTATNEEEAALAARKIGFPVLVRPSYVLGGRAMEIVENEEDLRSYMRTAVKASPDHPVLVDSYIVGQECEVDAISDGKNVLIPGIMEHIERAGVHSGDSMAVYPPQTLSQKVQETIADYTKRLAIGLHCLGMMNIQFVIKDEKVYVIEVNPRASRTVPFLSKVTNIPMAQVATKLILGQSLSELGYQNGLYPESTRVHIKAPVFSFTKLAKVDSLLGPEMKSTGEVMGSDATLEKALYKAFEASYLHLPTFGNVVFTIADDAKEEALNLARRFQNIGYGILATEGTAAFFASHGLQAQPVGKIGDDDKDIPSFVRKGRIQAIINTVGTKRTADEDGEQIRRSAIEHGVPLFTALDTANAMLKVLESRSFVTEAI</sequence>
<dbReference type="EC" id="6.3.4.16" evidence="1"/>
<dbReference type="EC" id="6.3.5.5" evidence="1"/>
<dbReference type="EMBL" id="CP001033">
    <property type="protein sequence ID" value="ACB90491.1"/>
    <property type="molecule type" value="Genomic_DNA"/>
</dbReference>
<dbReference type="RefSeq" id="WP_001126409.1">
    <property type="nucleotide sequence ID" value="NC_010582.1"/>
</dbReference>
<dbReference type="SMR" id="B2IQ67"/>
<dbReference type="KEGG" id="spw:SPCG_1239"/>
<dbReference type="HOGENOM" id="CLU_000513_1_2_9"/>
<dbReference type="UniPathway" id="UPA00068">
    <property type="reaction ID" value="UER00171"/>
</dbReference>
<dbReference type="UniPathway" id="UPA00070">
    <property type="reaction ID" value="UER00115"/>
</dbReference>
<dbReference type="GO" id="GO:0005737">
    <property type="term" value="C:cytoplasm"/>
    <property type="evidence" value="ECO:0007669"/>
    <property type="project" value="TreeGrafter"/>
</dbReference>
<dbReference type="GO" id="GO:0005524">
    <property type="term" value="F:ATP binding"/>
    <property type="evidence" value="ECO:0007669"/>
    <property type="project" value="UniProtKB-UniRule"/>
</dbReference>
<dbReference type="GO" id="GO:0004087">
    <property type="term" value="F:carbamoyl-phosphate synthase (ammonia) activity"/>
    <property type="evidence" value="ECO:0007669"/>
    <property type="project" value="RHEA"/>
</dbReference>
<dbReference type="GO" id="GO:0004088">
    <property type="term" value="F:carbamoyl-phosphate synthase (glutamine-hydrolyzing) activity"/>
    <property type="evidence" value="ECO:0007669"/>
    <property type="project" value="UniProtKB-UniRule"/>
</dbReference>
<dbReference type="GO" id="GO:0046872">
    <property type="term" value="F:metal ion binding"/>
    <property type="evidence" value="ECO:0007669"/>
    <property type="project" value="UniProtKB-KW"/>
</dbReference>
<dbReference type="GO" id="GO:0044205">
    <property type="term" value="P:'de novo' UMP biosynthetic process"/>
    <property type="evidence" value="ECO:0007669"/>
    <property type="project" value="UniProtKB-UniRule"/>
</dbReference>
<dbReference type="GO" id="GO:0006541">
    <property type="term" value="P:glutamine metabolic process"/>
    <property type="evidence" value="ECO:0007669"/>
    <property type="project" value="TreeGrafter"/>
</dbReference>
<dbReference type="GO" id="GO:0006526">
    <property type="term" value="P:L-arginine biosynthetic process"/>
    <property type="evidence" value="ECO:0007669"/>
    <property type="project" value="UniProtKB-UniRule"/>
</dbReference>
<dbReference type="CDD" id="cd01424">
    <property type="entry name" value="MGS_CPS_II"/>
    <property type="match status" value="1"/>
</dbReference>
<dbReference type="FunFam" id="1.10.1030.10:FF:000002">
    <property type="entry name" value="Carbamoyl-phosphate synthase large chain"/>
    <property type="match status" value="1"/>
</dbReference>
<dbReference type="FunFam" id="3.30.1490.20:FF:000001">
    <property type="entry name" value="Carbamoyl-phosphate synthase large chain"/>
    <property type="match status" value="1"/>
</dbReference>
<dbReference type="FunFam" id="3.30.470.20:FF:000001">
    <property type="entry name" value="Carbamoyl-phosphate synthase large chain"/>
    <property type="match status" value="1"/>
</dbReference>
<dbReference type="FunFam" id="3.30.470.20:FF:000026">
    <property type="entry name" value="Carbamoyl-phosphate synthase large chain"/>
    <property type="match status" value="1"/>
</dbReference>
<dbReference type="FunFam" id="3.40.50.1380:FF:000017">
    <property type="entry name" value="Carbamoyl-phosphate synthase large chain"/>
    <property type="match status" value="1"/>
</dbReference>
<dbReference type="FunFam" id="3.40.50.20:FF:000001">
    <property type="entry name" value="Carbamoyl-phosphate synthase large chain"/>
    <property type="match status" value="2"/>
</dbReference>
<dbReference type="Gene3D" id="3.40.50.20">
    <property type="match status" value="2"/>
</dbReference>
<dbReference type="Gene3D" id="3.30.1490.20">
    <property type="entry name" value="ATP-grasp fold, A domain"/>
    <property type="match status" value="1"/>
</dbReference>
<dbReference type="Gene3D" id="3.30.470.20">
    <property type="entry name" value="ATP-grasp fold, B domain"/>
    <property type="match status" value="2"/>
</dbReference>
<dbReference type="Gene3D" id="1.10.1030.10">
    <property type="entry name" value="Carbamoyl-phosphate synthetase, large subunit oligomerisation domain"/>
    <property type="match status" value="1"/>
</dbReference>
<dbReference type="Gene3D" id="3.40.50.1380">
    <property type="entry name" value="Methylglyoxal synthase-like domain"/>
    <property type="match status" value="1"/>
</dbReference>
<dbReference type="HAMAP" id="MF_01210_B">
    <property type="entry name" value="CPSase_L_chain_B"/>
    <property type="match status" value="1"/>
</dbReference>
<dbReference type="InterPro" id="IPR011761">
    <property type="entry name" value="ATP-grasp"/>
</dbReference>
<dbReference type="InterPro" id="IPR013815">
    <property type="entry name" value="ATP_grasp_subdomain_1"/>
</dbReference>
<dbReference type="InterPro" id="IPR006275">
    <property type="entry name" value="CarbamoylP_synth_lsu"/>
</dbReference>
<dbReference type="InterPro" id="IPR005480">
    <property type="entry name" value="CarbamoylP_synth_lsu_oligo"/>
</dbReference>
<dbReference type="InterPro" id="IPR036897">
    <property type="entry name" value="CarbamoylP_synth_lsu_oligo_sf"/>
</dbReference>
<dbReference type="InterPro" id="IPR005479">
    <property type="entry name" value="CbamoylP_synth_lsu-like_ATP-bd"/>
</dbReference>
<dbReference type="InterPro" id="IPR005483">
    <property type="entry name" value="CbamoylP_synth_lsu_CPSase_dom"/>
</dbReference>
<dbReference type="InterPro" id="IPR011607">
    <property type="entry name" value="MGS-like_dom"/>
</dbReference>
<dbReference type="InterPro" id="IPR036914">
    <property type="entry name" value="MGS-like_dom_sf"/>
</dbReference>
<dbReference type="InterPro" id="IPR033937">
    <property type="entry name" value="MGS_CPS_CarB"/>
</dbReference>
<dbReference type="InterPro" id="IPR016185">
    <property type="entry name" value="PreATP-grasp_dom_sf"/>
</dbReference>
<dbReference type="NCBIfam" id="TIGR01369">
    <property type="entry name" value="CPSaseII_lrg"/>
    <property type="match status" value="1"/>
</dbReference>
<dbReference type="NCBIfam" id="NF003671">
    <property type="entry name" value="PRK05294.1"/>
    <property type="match status" value="1"/>
</dbReference>
<dbReference type="NCBIfam" id="NF009455">
    <property type="entry name" value="PRK12815.1"/>
    <property type="match status" value="1"/>
</dbReference>
<dbReference type="PANTHER" id="PTHR11405:SF53">
    <property type="entry name" value="CARBAMOYL-PHOSPHATE SYNTHASE [AMMONIA], MITOCHONDRIAL"/>
    <property type="match status" value="1"/>
</dbReference>
<dbReference type="PANTHER" id="PTHR11405">
    <property type="entry name" value="CARBAMOYLTRANSFERASE FAMILY MEMBER"/>
    <property type="match status" value="1"/>
</dbReference>
<dbReference type="Pfam" id="PF02786">
    <property type="entry name" value="CPSase_L_D2"/>
    <property type="match status" value="2"/>
</dbReference>
<dbReference type="Pfam" id="PF02787">
    <property type="entry name" value="CPSase_L_D3"/>
    <property type="match status" value="1"/>
</dbReference>
<dbReference type="Pfam" id="PF02142">
    <property type="entry name" value="MGS"/>
    <property type="match status" value="1"/>
</dbReference>
<dbReference type="PRINTS" id="PR00098">
    <property type="entry name" value="CPSASE"/>
</dbReference>
<dbReference type="SMART" id="SM01096">
    <property type="entry name" value="CPSase_L_D3"/>
    <property type="match status" value="1"/>
</dbReference>
<dbReference type="SMART" id="SM01209">
    <property type="entry name" value="GARS_A"/>
    <property type="match status" value="1"/>
</dbReference>
<dbReference type="SMART" id="SM00851">
    <property type="entry name" value="MGS"/>
    <property type="match status" value="1"/>
</dbReference>
<dbReference type="SUPFAM" id="SSF48108">
    <property type="entry name" value="Carbamoyl phosphate synthetase, large subunit connection domain"/>
    <property type="match status" value="1"/>
</dbReference>
<dbReference type="SUPFAM" id="SSF56059">
    <property type="entry name" value="Glutathione synthetase ATP-binding domain-like"/>
    <property type="match status" value="2"/>
</dbReference>
<dbReference type="SUPFAM" id="SSF52335">
    <property type="entry name" value="Methylglyoxal synthase-like"/>
    <property type="match status" value="1"/>
</dbReference>
<dbReference type="SUPFAM" id="SSF52440">
    <property type="entry name" value="PreATP-grasp domain"/>
    <property type="match status" value="2"/>
</dbReference>
<dbReference type="PROSITE" id="PS50975">
    <property type="entry name" value="ATP_GRASP"/>
    <property type="match status" value="2"/>
</dbReference>
<dbReference type="PROSITE" id="PS00866">
    <property type="entry name" value="CPSASE_1"/>
    <property type="match status" value="2"/>
</dbReference>
<dbReference type="PROSITE" id="PS00867">
    <property type="entry name" value="CPSASE_2"/>
    <property type="match status" value="2"/>
</dbReference>
<dbReference type="PROSITE" id="PS51855">
    <property type="entry name" value="MGS"/>
    <property type="match status" value="1"/>
</dbReference>
<organism>
    <name type="scientific">Streptococcus pneumoniae (strain CGSP14)</name>
    <dbReference type="NCBI Taxonomy" id="516950"/>
    <lineage>
        <taxon>Bacteria</taxon>
        <taxon>Bacillati</taxon>
        <taxon>Bacillota</taxon>
        <taxon>Bacilli</taxon>
        <taxon>Lactobacillales</taxon>
        <taxon>Streptococcaceae</taxon>
        <taxon>Streptococcus</taxon>
    </lineage>
</organism>
<gene>
    <name evidence="1" type="primary">carB</name>
    <name type="ordered locus">SPCG_1239</name>
</gene>
<comment type="function">
    <text evidence="1">Large subunit of the glutamine-dependent carbamoyl phosphate synthetase (CPSase). CPSase catalyzes the formation of carbamoyl phosphate from the ammonia moiety of glutamine, carbonate, and phosphate donated by ATP, constituting the first step of 2 biosynthetic pathways, one leading to arginine and/or urea and the other to pyrimidine nucleotides. The large subunit (synthetase) binds the substrates ammonia (free or transferred from glutamine from the small subunit), hydrogencarbonate and ATP and carries out an ATP-coupled ligase reaction, activating hydrogencarbonate by forming carboxy phosphate which reacts with ammonia to form carbamoyl phosphate.</text>
</comment>
<comment type="catalytic activity">
    <reaction evidence="1">
        <text>hydrogencarbonate + L-glutamine + 2 ATP + H2O = carbamoyl phosphate + L-glutamate + 2 ADP + phosphate + 2 H(+)</text>
        <dbReference type="Rhea" id="RHEA:18633"/>
        <dbReference type="ChEBI" id="CHEBI:15377"/>
        <dbReference type="ChEBI" id="CHEBI:15378"/>
        <dbReference type="ChEBI" id="CHEBI:17544"/>
        <dbReference type="ChEBI" id="CHEBI:29985"/>
        <dbReference type="ChEBI" id="CHEBI:30616"/>
        <dbReference type="ChEBI" id="CHEBI:43474"/>
        <dbReference type="ChEBI" id="CHEBI:58228"/>
        <dbReference type="ChEBI" id="CHEBI:58359"/>
        <dbReference type="ChEBI" id="CHEBI:456216"/>
        <dbReference type="EC" id="6.3.5.5"/>
    </reaction>
</comment>
<comment type="catalytic activity">
    <molecule>Carbamoyl phosphate synthase large chain</molecule>
    <reaction evidence="1">
        <text>hydrogencarbonate + NH4(+) + 2 ATP = carbamoyl phosphate + 2 ADP + phosphate + 2 H(+)</text>
        <dbReference type="Rhea" id="RHEA:18029"/>
        <dbReference type="ChEBI" id="CHEBI:15378"/>
        <dbReference type="ChEBI" id="CHEBI:17544"/>
        <dbReference type="ChEBI" id="CHEBI:28938"/>
        <dbReference type="ChEBI" id="CHEBI:30616"/>
        <dbReference type="ChEBI" id="CHEBI:43474"/>
        <dbReference type="ChEBI" id="CHEBI:58228"/>
        <dbReference type="ChEBI" id="CHEBI:456216"/>
        <dbReference type="EC" id="6.3.4.16"/>
    </reaction>
</comment>
<comment type="cofactor">
    <cofactor evidence="1">
        <name>Mg(2+)</name>
        <dbReference type="ChEBI" id="CHEBI:18420"/>
    </cofactor>
    <cofactor evidence="1">
        <name>Mn(2+)</name>
        <dbReference type="ChEBI" id="CHEBI:29035"/>
    </cofactor>
    <text evidence="1">Binds 4 Mg(2+) or Mn(2+) ions per subunit.</text>
</comment>
<comment type="pathway">
    <text evidence="1">Amino-acid biosynthesis; L-arginine biosynthesis; carbamoyl phosphate from bicarbonate: step 1/1.</text>
</comment>
<comment type="pathway">
    <text evidence="1">Pyrimidine metabolism; UMP biosynthesis via de novo pathway; (S)-dihydroorotate from bicarbonate: step 1/3.</text>
</comment>
<comment type="subunit">
    <text evidence="1">Composed of two chains; the small (or glutamine) chain promotes the hydrolysis of glutamine to ammonia, which is used by the large (or ammonia) chain to synthesize carbamoyl phosphate. Tetramer of heterodimers (alpha,beta)4.</text>
</comment>
<comment type="domain">
    <text evidence="1">The large subunit is composed of 2 ATP-grasp domains that are involved in binding the 2 ATP molecules needed for carbamoyl phosphate synthesis. The N-terminal ATP-grasp domain (referred to as the carboxyphosphate synthetic component) catalyzes the ATP-dependent phosphorylation of hydrogencarbonate to carboxyphosphate and the subsequent nucleophilic attack by ammonia to form a carbamate intermediate. The C-terminal ATP-grasp domain (referred to as the carbamoyl phosphate synthetic component) then catalyzes the phosphorylation of carbamate with the second ATP to form the end product carbamoyl phosphate. The reactive and unstable enzyme intermediates are sequentially channeled from one active site to the next through the interior of the protein over a distance of at least 96 A.</text>
</comment>
<comment type="similarity">
    <text evidence="1">Belongs to the CarB family.</text>
</comment>